<protein>
    <recommendedName>
        <fullName>Endothelin-3 receptor</fullName>
    </recommendedName>
    <alternativeName>
        <fullName>Endothelin C receptor</fullName>
        <shortName>ET-C</shortName>
        <shortName>ET-CR</shortName>
    </alternativeName>
</protein>
<accession>P32940</accession>
<proteinExistence type="evidence at transcript level"/>
<feature type="signal peptide" evidence="1">
    <location>
        <begin position="1"/>
        <end position="18"/>
    </location>
</feature>
<feature type="chain" id="PRO_0000012734" description="Endothelin-3 receptor">
    <location>
        <begin position="19"/>
        <end position="444"/>
    </location>
</feature>
<feature type="topological domain" description="Extracellular" evidence="1">
    <location>
        <begin position="19"/>
        <end position="88"/>
    </location>
</feature>
<feature type="transmembrane region" description="Helical; Name=1" evidence="1">
    <location>
        <begin position="89"/>
        <end position="113"/>
    </location>
</feature>
<feature type="topological domain" description="Cytoplasmic" evidence="1">
    <location>
        <begin position="114"/>
        <end position="124"/>
    </location>
</feature>
<feature type="transmembrane region" description="Helical; Name=2" evidence="1">
    <location>
        <begin position="125"/>
        <end position="145"/>
    </location>
</feature>
<feature type="topological domain" description="Extracellular" evidence="1">
    <location>
        <begin position="146"/>
        <end position="161"/>
    </location>
</feature>
<feature type="transmembrane region" description="Helical; Name=3" evidence="1">
    <location>
        <begin position="162"/>
        <end position="180"/>
    </location>
</feature>
<feature type="topological domain" description="Cytoplasmic" evidence="1">
    <location>
        <begin position="181"/>
        <end position="201"/>
    </location>
</feature>
<feature type="transmembrane region" description="Helical; Name=4" evidence="1">
    <location>
        <begin position="202"/>
        <end position="226"/>
    </location>
</feature>
<feature type="topological domain" description="Extracellular" evidence="1">
    <location>
        <begin position="227"/>
        <end position="254"/>
    </location>
</feature>
<feature type="transmembrane region" description="Helical; Name=5" evidence="1">
    <location>
        <begin position="255"/>
        <end position="279"/>
    </location>
</feature>
<feature type="topological domain" description="Cytoplasmic" evidence="1">
    <location>
        <begin position="280"/>
        <end position="307"/>
    </location>
</feature>
<feature type="transmembrane region" description="Helical; Name=6" evidence="1">
    <location>
        <begin position="308"/>
        <end position="328"/>
    </location>
</feature>
<feature type="topological domain" description="Extracellular" evidence="1">
    <location>
        <begin position="329"/>
        <end position="365"/>
    </location>
</feature>
<feature type="transmembrane region" description="Helical; Name=7" evidence="1">
    <location>
        <begin position="366"/>
        <end position="386"/>
    </location>
</feature>
<feature type="topological domain" description="Cytoplasmic" evidence="1">
    <location>
        <begin position="387"/>
        <end position="444"/>
    </location>
</feature>
<feature type="region of interest" description="Disordered" evidence="3">
    <location>
        <begin position="416"/>
        <end position="444"/>
    </location>
</feature>
<feature type="compositionally biased region" description="Basic and acidic residues" evidence="3">
    <location>
        <begin position="424"/>
        <end position="434"/>
    </location>
</feature>
<feature type="compositionally biased region" description="Low complexity" evidence="3">
    <location>
        <begin position="435"/>
        <end position="444"/>
    </location>
</feature>
<feature type="glycosylation site" description="N-linked (GlcNAc...) asparagine" evidence="1">
    <location>
        <position position="60"/>
    </location>
</feature>
<reference key="1">
    <citation type="journal article" date="1993" name="J. Biol. Chem.">
        <title>Cloning and characterization of an endothelin-3 specific receptor (ETC receptor) from Xenopus laevis dermal melanophores.</title>
        <authorList>
            <person name="Karne S."/>
            <person name="Jayawickreme C.K."/>
            <person name="Lerner M.R."/>
        </authorList>
    </citation>
    <scope>NUCLEOTIDE SEQUENCE [MRNA]</scope>
    <source>
        <tissue>Dermal melanophore</tissue>
    </source>
</reference>
<sequence>MATVILFVAWMACLMVGVCYQEFQTQQNFPDISNPSQELNQEPAHRIVQLDSIQNNGALNMSTGNVLNMSPPPPSPCLSRAKIRHAFKYVTTILSCVIFLVGIVGNSTLLRIIYKNKCMRNGPNVLIASLALGDLFYILIAIPIISISFWLSTGHSEYIYQLVHLYRARVYSLSLCALSIDRYRAVASWNRIRSIGIPVRKAIELTLIWAVAIIVAVPEAIAFNLVELDFRGQTILVCMLPMEQTSDFMRFYQEVKVWWLFGFYFCLPLACTGVFYTLMSCEMLSIKNGMRIALNDHMKQRREVAKTVFCLVVIFALCWLPLHVSSIFVRLSATVKRACILKNKRSCIMAEIQTGVNYQLLMVMNYTGINMASLNSCIGPVALYFVSRKFKNCFQSCLCCWCHRPTLTITPMDEKGSGGKWKANGHDLDLDRSSSRLSNKYSSS</sequence>
<keyword id="KW-1003">Cell membrane</keyword>
<keyword id="KW-0297">G-protein coupled receptor</keyword>
<keyword id="KW-0325">Glycoprotein</keyword>
<keyword id="KW-0472">Membrane</keyword>
<keyword id="KW-0675">Receptor</keyword>
<keyword id="KW-1185">Reference proteome</keyword>
<keyword id="KW-0732">Signal</keyword>
<keyword id="KW-0807">Transducer</keyword>
<keyword id="KW-0812">Transmembrane</keyword>
<keyword id="KW-1133">Transmembrane helix</keyword>
<comment type="function">
    <text>Receptor for endothelin-3. Mediates its action by association with G proteins that activate a phosphatidylinositol-calcium second messenger system.</text>
</comment>
<comment type="subcellular location">
    <subcellularLocation>
        <location>Cell membrane</location>
        <topology>Multi-pass membrane protein</topology>
    </subcellularLocation>
</comment>
<comment type="similarity">
    <text evidence="2">Belongs to the G-protein coupled receptor 1 family. Endothelin receptor subfamily.</text>
</comment>
<dbReference type="EMBL" id="L20299">
    <property type="protein sequence ID" value="AAA49704.1"/>
    <property type="molecule type" value="mRNA"/>
</dbReference>
<dbReference type="PIR" id="A48538">
    <property type="entry name" value="A48538"/>
</dbReference>
<dbReference type="RefSeq" id="NP_001079347.1">
    <property type="nucleotide sequence ID" value="NM_001085878.1"/>
</dbReference>
<dbReference type="SMR" id="P32940"/>
<dbReference type="GeneID" id="378691"/>
<dbReference type="CTD" id="1910"/>
<dbReference type="Proteomes" id="UP000186698">
    <property type="component" value="Unplaced"/>
</dbReference>
<dbReference type="GO" id="GO:0005886">
    <property type="term" value="C:plasma membrane"/>
    <property type="evidence" value="ECO:0000318"/>
    <property type="project" value="GO_Central"/>
</dbReference>
<dbReference type="GO" id="GO:0004962">
    <property type="term" value="F:endothelin receptor activity"/>
    <property type="evidence" value="ECO:0000318"/>
    <property type="project" value="GO_Central"/>
</dbReference>
<dbReference type="GO" id="GO:0048066">
    <property type="term" value="P:developmental pigmentation"/>
    <property type="evidence" value="ECO:0000318"/>
    <property type="project" value="GO_Central"/>
</dbReference>
<dbReference type="GO" id="GO:0086100">
    <property type="term" value="P:endothelin receptor signaling pathway"/>
    <property type="evidence" value="ECO:0000318"/>
    <property type="project" value="GO_Central"/>
</dbReference>
<dbReference type="GO" id="GO:0048484">
    <property type="term" value="P:enteric nervous system development"/>
    <property type="evidence" value="ECO:0007669"/>
    <property type="project" value="InterPro"/>
</dbReference>
<dbReference type="GO" id="GO:0008217">
    <property type="term" value="P:regulation of blood pressure"/>
    <property type="evidence" value="ECO:0007669"/>
    <property type="project" value="InterPro"/>
</dbReference>
<dbReference type="GO" id="GO:0042310">
    <property type="term" value="P:vasoconstriction"/>
    <property type="evidence" value="ECO:0000318"/>
    <property type="project" value="GO_Central"/>
</dbReference>
<dbReference type="CDD" id="cd15977">
    <property type="entry name" value="7tmA_ET-CR"/>
    <property type="match status" value="1"/>
</dbReference>
<dbReference type="Gene3D" id="1.20.1070.10">
    <property type="entry name" value="Rhodopsin 7-helix transmembrane proteins"/>
    <property type="match status" value="1"/>
</dbReference>
<dbReference type="InterPro" id="IPR000499">
    <property type="entry name" value="Endthln_rcpt"/>
</dbReference>
<dbReference type="InterPro" id="IPR051193">
    <property type="entry name" value="GPCR_endothelin_rcpt"/>
</dbReference>
<dbReference type="InterPro" id="IPR000276">
    <property type="entry name" value="GPCR_Rhodpsn"/>
</dbReference>
<dbReference type="InterPro" id="IPR017452">
    <property type="entry name" value="GPCR_Rhodpsn_7TM"/>
</dbReference>
<dbReference type="PANTHER" id="PTHR46099:SF4">
    <property type="entry name" value="ENDOTHELIN RECEPTOR TYPE B"/>
    <property type="match status" value="1"/>
</dbReference>
<dbReference type="PANTHER" id="PTHR46099">
    <property type="entry name" value="G_PROTEIN_RECEP_F1_2 DOMAIN-CONTAINING PROTEIN"/>
    <property type="match status" value="1"/>
</dbReference>
<dbReference type="Pfam" id="PF00001">
    <property type="entry name" value="7tm_1"/>
    <property type="match status" value="1"/>
</dbReference>
<dbReference type="PRINTS" id="PR00366">
    <property type="entry name" value="ENDOTHELINR"/>
</dbReference>
<dbReference type="PRINTS" id="PR00237">
    <property type="entry name" value="GPCRRHODOPSN"/>
</dbReference>
<dbReference type="SUPFAM" id="SSF81321">
    <property type="entry name" value="Family A G protein-coupled receptor-like"/>
    <property type="match status" value="1"/>
</dbReference>
<dbReference type="PROSITE" id="PS50262">
    <property type="entry name" value="G_PROTEIN_RECEP_F1_2"/>
    <property type="match status" value="1"/>
</dbReference>
<evidence type="ECO:0000255" key="1"/>
<evidence type="ECO:0000255" key="2">
    <source>
        <dbReference type="PROSITE-ProRule" id="PRU00521"/>
    </source>
</evidence>
<evidence type="ECO:0000256" key="3">
    <source>
        <dbReference type="SAM" id="MobiDB-lite"/>
    </source>
</evidence>
<name>EDNR3_XENLA</name>
<organism>
    <name type="scientific">Xenopus laevis</name>
    <name type="common">African clawed frog</name>
    <dbReference type="NCBI Taxonomy" id="8355"/>
    <lineage>
        <taxon>Eukaryota</taxon>
        <taxon>Metazoa</taxon>
        <taxon>Chordata</taxon>
        <taxon>Craniata</taxon>
        <taxon>Vertebrata</taxon>
        <taxon>Euteleostomi</taxon>
        <taxon>Amphibia</taxon>
        <taxon>Batrachia</taxon>
        <taxon>Anura</taxon>
        <taxon>Pipoidea</taxon>
        <taxon>Pipidae</taxon>
        <taxon>Xenopodinae</taxon>
        <taxon>Xenopus</taxon>
        <taxon>Xenopus</taxon>
    </lineage>
</organism>